<comment type="function">
    <text evidence="1">Promotes RNA polymerase assembly. Latches the N- and C-terminal regions of the beta' subunit thereby facilitating its interaction with the beta and alpha subunits.</text>
</comment>
<comment type="catalytic activity">
    <reaction evidence="1">
        <text>RNA(n) + a ribonucleoside 5'-triphosphate = RNA(n+1) + diphosphate</text>
        <dbReference type="Rhea" id="RHEA:21248"/>
        <dbReference type="Rhea" id="RHEA-COMP:14527"/>
        <dbReference type="Rhea" id="RHEA-COMP:17342"/>
        <dbReference type="ChEBI" id="CHEBI:33019"/>
        <dbReference type="ChEBI" id="CHEBI:61557"/>
        <dbReference type="ChEBI" id="CHEBI:140395"/>
        <dbReference type="EC" id="2.7.7.6"/>
    </reaction>
</comment>
<comment type="subunit">
    <text evidence="1">The RNAP catalytic core consists of 2 alpha, 1 beta, 1 beta' and 1 omega subunit. When a sigma factor is associated with the core the holoenzyme is formed, which can initiate transcription.</text>
</comment>
<comment type="similarity">
    <text evidence="1">Belongs to the RNA polymerase subunit omega family.</text>
</comment>
<accession>C0ZG01</accession>
<reference key="1">
    <citation type="submission" date="2005-03" db="EMBL/GenBank/DDBJ databases">
        <title>Brevibacillus brevis strain 47, complete genome.</title>
        <authorList>
            <person name="Hosoyama A."/>
            <person name="Yamada R."/>
            <person name="Hongo Y."/>
            <person name="Terui Y."/>
            <person name="Ankai A."/>
            <person name="Masuyama W."/>
            <person name="Sekiguchi M."/>
            <person name="Takeda T."/>
            <person name="Asano K."/>
            <person name="Ohji S."/>
            <person name="Ichikawa N."/>
            <person name="Narita S."/>
            <person name="Aoki N."/>
            <person name="Miura H."/>
            <person name="Matsushita S."/>
            <person name="Sekigawa T."/>
            <person name="Yamagata H."/>
            <person name="Yoshikawa H."/>
            <person name="Udaka S."/>
            <person name="Tanikawa S."/>
            <person name="Fujita N."/>
        </authorList>
    </citation>
    <scope>NUCLEOTIDE SEQUENCE [LARGE SCALE GENOMIC DNA]</scope>
    <source>
        <strain>47 / JCM 6285 / NBRC 100599</strain>
    </source>
</reference>
<sequence length="68" mass="7866">MLYPSIDELTEKAESKYILVTVASKRARQLRENSEVQVVRPKSKKFVGLALEEFISDELVHEFLDGRK</sequence>
<dbReference type="EC" id="2.7.7.6" evidence="1"/>
<dbReference type="EMBL" id="AP008955">
    <property type="protein sequence ID" value="BAH44710.1"/>
    <property type="molecule type" value="Genomic_DNA"/>
</dbReference>
<dbReference type="RefSeq" id="WP_007728388.1">
    <property type="nucleotide sequence ID" value="NC_012491.1"/>
</dbReference>
<dbReference type="SMR" id="C0ZG01"/>
<dbReference type="STRING" id="358681.BBR47_37330"/>
<dbReference type="KEGG" id="bbe:BBR47_37330"/>
<dbReference type="eggNOG" id="COG1758">
    <property type="taxonomic scope" value="Bacteria"/>
</dbReference>
<dbReference type="HOGENOM" id="CLU_125406_6_0_9"/>
<dbReference type="Proteomes" id="UP000001877">
    <property type="component" value="Chromosome"/>
</dbReference>
<dbReference type="GO" id="GO:0000428">
    <property type="term" value="C:DNA-directed RNA polymerase complex"/>
    <property type="evidence" value="ECO:0007669"/>
    <property type="project" value="UniProtKB-KW"/>
</dbReference>
<dbReference type="GO" id="GO:0003677">
    <property type="term" value="F:DNA binding"/>
    <property type="evidence" value="ECO:0007669"/>
    <property type="project" value="UniProtKB-UniRule"/>
</dbReference>
<dbReference type="GO" id="GO:0003899">
    <property type="term" value="F:DNA-directed RNA polymerase activity"/>
    <property type="evidence" value="ECO:0007669"/>
    <property type="project" value="UniProtKB-UniRule"/>
</dbReference>
<dbReference type="GO" id="GO:0006351">
    <property type="term" value="P:DNA-templated transcription"/>
    <property type="evidence" value="ECO:0007669"/>
    <property type="project" value="UniProtKB-UniRule"/>
</dbReference>
<dbReference type="Gene3D" id="3.90.940.10">
    <property type="match status" value="1"/>
</dbReference>
<dbReference type="HAMAP" id="MF_00366">
    <property type="entry name" value="RNApol_bact_RpoZ"/>
    <property type="match status" value="1"/>
</dbReference>
<dbReference type="InterPro" id="IPR003716">
    <property type="entry name" value="DNA-dir_RNA_pol_omega"/>
</dbReference>
<dbReference type="InterPro" id="IPR006110">
    <property type="entry name" value="Pol_omega/Rpo6/RPB6"/>
</dbReference>
<dbReference type="InterPro" id="IPR036161">
    <property type="entry name" value="RPB6/omega-like_sf"/>
</dbReference>
<dbReference type="NCBIfam" id="TIGR00690">
    <property type="entry name" value="rpoZ"/>
    <property type="match status" value="1"/>
</dbReference>
<dbReference type="PANTHER" id="PTHR34476">
    <property type="entry name" value="DNA-DIRECTED RNA POLYMERASE SUBUNIT OMEGA"/>
    <property type="match status" value="1"/>
</dbReference>
<dbReference type="PANTHER" id="PTHR34476:SF1">
    <property type="entry name" value="DNA-DIRECTED RNA POLYMERASE SUBUNIT OMEGA"/>
    <property type="match status" value="1"/>
</dbReference>
<dbReference type="Pfam" id="PF01192">
    <property type="entry name" value="RNA_pol_Rpb6"/>
    <property type="match status" value="1"/>
</dbReference>
<dbReference type="SMART" id="SM01409">
    <property type="entry name" value="RNA_pol_Rpb6"/>
    <property type="match status" value="1"/>
</dbReference>
<dbReference type="SUPFAM" id="SSF63562">
    <property type="entry name" value="RPB6/omega subunit-like"/>
    <property type="match status" value="1"/>
</dbReference>
<proteinExistence type="inferred from homology"/>
<name>RPOZ_BREBN</name>
<gene>
    <name evidence="1" type="primary">rpoZ</name>
    <name type="ordered locus">BBR47_37330</name>
</gene>
<protein>
    <recommendedName>
        <fullName evidence="1">DNA-directed RNA polymerase subunit omega</fullName>
        <shortName evidence="1">RNAP omega subunit</shortName>
        <ecNumber evidence="1">2.7.7.6</ecNumber>
    </recommendedName>
    <alternativeName>
        <fullName evidence="1">RNA polymerase omega subunit</fullName>
    </alternativeName>
    <alternativeName>
        <fullName evidence="1">Transcriptase subunit omega</fullName>
    </alternativeName>
</protein>
<feature type="chain" id="PRO_1000194782" description="DNA-directed RNA polymerase subunit omega">
    <location>
        <begin position="1"/>
        <end position="68"/>
    </location>
</feature>
<organism>
    <name type="scientific">Brevibacillus brevis (strain 47 / JCM 6285 / NBRC 100599)</name>
    <dbReference type="NCBI Taxonomy" id="358681"/>
    <lineage>
        <taxon>Bacteria</taxon>
        <taxon>Bacillati</taxon>
        <taxon>Bacillota</taxon>
        <taxon>Bacilli</taxon>
        <taxon>Bacillales</taxon>
        <taxon>Paenibacillaceae</taxon>
        <taxon>Brevibacillus</taxon>
    </lineage>
</organism>
<keyword id="KW-0240">DNA-directed RNA polymerase</keyword>
<keyword id="KW-0548">Nucleotidyltransferase</keyword>
<keyword id="KW-1185">Reference proteome</keyword>
<keyword id="KW-0804">Transcription</keyword>
<keyword id="KW-0808">Transferase</keyword>
<evidence type="ECO:0000255" key="1">
    <source>
        <dbReference type="HAMAP-Rule" id="MF_00366"/>
    </source>
</evidence>